<name>QUEA_PECCP</name>
<keyword id="KW-0963">Cytoplasm</keyword>
<keyword id="KW-0671">Queuosine biosynthesis</keyword>
<keyword id="KW-0949">S-adenosyl-L-methionine</keyword>
<keyword id="KW-0808">Transferase</keyword>
<reference key="1">
    <citation type="submission" date="2009-07" db="EMBL/GenBank/DDBJ databases">
        <title>Complete sequence of Pectobacterium carotovorum subsp. carotovorum PC1.</title>
        <authorList>
            <consortium name="US DOE Joint Genome Institute"/>
            <person name="Lucas S."/>
            <person name="Copeland A."/>
            <person name="Lapidus A."/>
            <person name="Glavina del Rio T."/>
            <person name="Tice H."/>
            <person name="Bruce D."/>
            <person name="Goodwin L."/>
            <person name="Pitluck S."/>
            <person name="Munk A.C."/>
            <person name="Brettin T."/>
            <person name="Detter J.C."/>
            <person name="Han C."/>
            <person name="Tapia R."/>
            <person name="Larimer F."/>
            <person name="Land M."/>
            <person name="Hauser L."/>
            <person name="Kyrpides N."/>
            <person name="Mikhailova N."/>
            <person name="Balakrishnan V."/>
            <person name="Glasner J."/>
            <person name="Perna N.T."/>
        </authorList>
    </citation>
    <scope>NUCLEOTIDE SEQUENCE [LARGE SCALE GENOMIC DNA]</scope>
    <source>
        <strain>PC1</strain>
    </source>
</reference>
<protein>
    <recommendedName>
        <fullName evidence="1">S-adenosylmethionine:tRNA ribosyltransferase-isomerase</fullName>
        <ecNumber evidence="1">2.4.99.17</ecNumber>
    </recommendedName>
    <alternativeName>
        <fullName evidence="1">Queuosine biosynthesis protein QueA</fullName>
    </alternativeName>
</protein>
<comment type="function">
    <text evidence="1">Transfers and isomerizes the ribose moiety from AdoMet to the 7-aminomethyl group of 7-deazaguanine (preQ1-tRNA) to give epoxyqueuosine (oQ-tRNA).</text>
</comment>
<comment type="catalytic activity">
    <reaction evidence="1">
        <text>7-aminomethyl-7-carbaguanosine(34) in tRNA + S-adenosyl-L-methionine = epoxyqueuosine(34) in tRNA + adenine + L-methionine + 2 H(+)</text>
        <dbReference type="Rhea" id="RHEA:32155"/>
        <dbReference type="Rhea" id="RHEA-COMP:10342"/>
        <dbReference type="Rhea" id="RHEA-COMP:18582"/>
        <dbReference type="ChEBI" id="CHEBI:15378"/>
        <dbReference type="ChEBI" id="CHEBI:16708"/>
        <dbReference type="ChEBI" id="CHEBI:57844"/>
        <dbReference type="ChEBI" id="CHEBI:59789"/>
        <dbReference type="ChEBI" id="CHEBI:82833"/>
        <dbReference type="ChEBI" id="CHEBI:194443"/>
        <dbReference type="EC" id="2.4.99.17"/>
    </reaction>
</comment>
<comment type="pathway">
    <text evidence="1">tRNA modification; tRNA-queuosine biosynthesis.</text>
</comment>
<comment type="subunit">
    <text evidence="1">Monomer.</text>
</comment>
<comment type="subcellular location">
    <subcellularLocation>
        <location evidence="1">Cytoplasm</location>
    </subcellularLocation>
</comment>
<comment type="similarity">
    <text evidence="1">Belongs to the QueA family.</text>
</comment>
<gene>
    <name evidence="1" type="primary">queA</name>
    <name type="ordered locus">PC1_1018</name>
</gene>
<evidence type="ECO:0000255" key="1">
    <source>
        <dbReference type="HAMAP-Rule" id="MF_00113"/>
    </source>
</evidence>
<feature type="chain" id="PRO_1000202957" description="S-adenosylmethionine:tRNA ribosyltransferase-isomerase">
    <location>
        <begin position="1"/>
        <end position="355"/>
    </location>
</feature>
<dbReference type="EC" id="2.4.99.17" evidence="1"/>
<dbReference type="EMBL" id="CP001657">
    <property type="protein sequence ID" value="ACT12067.1"/>
    <property type="molecule type" value="Genomic_DNA"/>
</dbReference>
<dbReference type="RefSeq" id="WP_012773701.1">
    <property type="nucleotide sequence ID" value="NC_012917.1"/>
</dbReference>
<dbReference type="SMR" id="C6DB25"/>
<dbReference type="STRING" id="561230.PC1_1018"/>
<dbReference type="KEGG" id="pct:PC1_1018"/>
<dbReference type="eggNOG" id="COG0809">
    <property type="taxonomic scope" value="Bacteria"/>
</dbReference>
<dbReference type="HOGENOM" id="CLU_039110_1_0_6"/>
<dbReference type="OrthoDB" id="9805933at2"/>
<dbReference type="UniPathway" id="UPA00392"/>
<dbReference type="Proteomes" id="UP000002736">
    <property type="component" value="Chromosome"/>
</dbReference>
<dbReference type="GO" id="GO:0005737">
    <property type="term" value="C:cytoplasm"/>
    <property type="evidence" value="ECO:0007669"/>
    <property type="project" value="UniProtKB-SubCell"/>
</dbReference>
<dbReference type="GO" id="GO:0051075">
    <property type="term" value="F:S-adenosylmethionine:tRNA ribosyltransferase-isomerase activity"/>
    <property type="evidence" value="ECO:0007669"/>
    <property type="project" value="UniProtKB-EC"/>
</dbReference>
<dbReference type="GO" id="GO:0008616">
    <property type="term" value="P:queuosine biosynthetic process"/>
    <property type="evidence" value="ECO:0007669"/>
    <property type="project" value="UniProtKB-UniRule"/>
</dbReference>
<dbReference type="GO" id="GO:0002099">
    <property type="term" value="P:tRNA wobble guanine modification"/>
    <property type="evidence" value="ECO:0007669"/>
    <property type="project" value="TreeGrafter"/>
</dbReference>
<dbReference type="FunFam" id="2.40.10.240:FF:000001">
    <property type="entry name" value="S-adenosylmethionine:tRNA ribosyltransferase-isomerase"/>
    <property type="match status" value="1"/>
</dbReference>
<dbReference type="FunFam" id="3.40.1780.10:FF:000001">
    <property type="entry name" value="S-adenosylmethionine:tRNA ribosyltransferase-isomerase"/>
    <property type="match status" value="1"/>
</dbReference>
<dbReference type="Gene3D" id="2.40.10.240">
    <property type="entry name" value="QueA-like"/>
    <property type="match status" value="1"/>
</dbReference>
<dbReference type="Gene3D" id="3.40.1780.10">
    <property type="entry name" value="QueA-like"/>
    <property type="match status" value="1"/>
</dbReference>
<dbReference type="HAMAP" id="MF_00113">
    <property type="entry name" value="QueA"/>
    <property type="match status" value="1"/>
</dbReference>
<dbReference type="InterPro" id="IPR003699">
    <property type="entry name" value="QueA"/>
</dbReference>
<dbReference type="InterPro" id="IPR042118">
    <property type="entry name" value="QueA_dom1"/>
</dbReference>
<dbReference type="InterPro" id="IPR042119">
    <property type="entry name" value="QueA_dom2"/>
</dbReference>
<dbReference type="InterPro" id="IPR036100">
    <property type="entry name" value="QueA_sf"/>
</dbReference>
<dbReference type="NCBIfam" id="NF001140">
    <property type="entry name" value="PRK00147.1"/>
    <property type="match status" value="1"/>
</dbReference>
<dbReference type="NCBIfam" id="TIGR00113">
    <property type="entry name" value="queA"/>
    <property type="match status" value="1"/>
</dbReference>
<dbReference type="PANTHER" id="PTHR30307">
    <property type="entry name" value="S-ADENOSYLMETHIONINE:TRNA RIBOSYLTRANSFERASE-ISOMERASE"/>
    <property type="match status" value="1"/>
</dbReference>
<dbReference type="PANTHER" id="PTHR30307:SF0">
    <property type="entry name" value="S-ADENOSYLMETHIONINE:TRNA RIBOSYLTRANSFERASE-ISOMERASE"/>
    <property type="match status" value="1"/>
</dbReference>
<dbReference type="Pfam" id="PF02547">
    <property type="entry name" value="Queuosine_synth"/>
    <property type="match status" value="1"/>
</dbReference>
<dbReference type="SUPFAM" id="SSF111337">
    <property type="entry name" value="QueA-like"/>
    <property type="match status" value="1"/>
</dbReference>
<organism>
    <name type="scientific">Pectobacterium carotovorum subsp. carotovorum (strain PC1)</name>
    <dbReference type="NCBI Taxonomy" id="561230"/>
    <lineage>
        <taxon>Bacteria</taxon>
        <taxon>Pseudomonadati</taxon>
        <taxon>Pseudomonadota</taxon>
        <taxon>Gammaproteobacteria</taxon>
        <taxon>Enterobacterales</taxon>
        <taxon>Pectobacteriaceae</taxon>
        <taxon>Pectobacterium</taxon>
    </lineage>
</organism>
<proteinExistence type="inferred from homology"/>
<accession>C6DB25</accession>
<sequence>MRVADFSFELPESLIAHYPQAERSGCRLLSLDGPTGDLTHGVFTDLLDKLNPGDLLVFNNTRVIPARLFGRKVSGGKLEVLVERVLDDHRVLAHVRASKAPKPGTELLLGDDESVKATMAARHDALFELHFDDSRDVLSILNDIGHMPLPPYIDRPDEDADRELYQTVYSQRPGAVAAPTAGLHFDEPMLAALREKGIEMAFVTLHVGAGTFQPVRVDTIEDHIMHAEYAEVPQDVVDAVLACKARGNRVIAVGTTSVRSLESAAQASQNAPIEPFFGDTKIFIYPGYHYRIIDALVTNFHLPESTLIMLVSAFAGYQNTMSAYRQAVAEQYRFFSYGDAMFITHNPMAEQEKVG</sequence>